<sequence length="183" mass="21095">MDIDPYKEFGASVELLSFLPSDFFPSIRDLLDTASALYREALESPEHCSPHHTALRQAILCWGELMNLATWVGSNLEDPASRELVVSYVNVNMGLKIRQLLWFHISCLTFGRETVLEYLVSFGVWIRTPPAYRPPNAPILSTLPETTVVRRRGRSPRRRTPSPRRRRSQSPRRRRSQSRESQC</sequence>
<organismHost>
    <name type="scientific">Homo sapiens</name>
    <name type="common">Human</name>
    <dbReference type="NCBI Taxonomy" id="9606"/>
</organismHost>
<organismHost>
    <name type="scientific">Pan troglodytes</name>
    <name type="common">Chimpanzee</name>
    <dbReference type="NCBI Taxonomy" id="9598"/>
</organismHost>
<keyword id="KW-0024">Alternative initiation</keyword>
<keyword id="KW-0167">Capsid protein</keyword>
<keyword id="KW-1176">Cytoplasmic inwards viral transport</keyword>
<keyword id="KW-0238">DNA-binding</keyword>
<keyword id="KW-1035">Host cytoplasm</keyword>
<keyword id="KW-0945">Host-virus interaction</keyword>
<keyword id="KW-1177">Microtubular inwards viral transport</keyword>
<keyword id="KW-0597">Phosphoprotein</keyword>
<keyword id="KW-0677">Repeat</keyword>
<keyword id="KW-0694">RNA-binding</keyword>
<keyword id="KW-1144">T=4 icosahedral capsid protein</keyword>
<keyword id="KW-1163">Viral penetration into host nucleus</keyword>
<keyword id="KW-0946">Virion</keyword>
<keyword id="KW-1160">Virus entry into host cell</keyword>
<reference key="1">
    <citation type="journal article" date="1983" name="Nucleic Acids Res.">
        <title>Cloning and structural analyses of hepatitis B virus DNAs, subtype adr.</title>
        <authorList>
            <person name="Fujiyama A."/>
            <person name="Miyanohara A."/>
            <person name="Nozaki C."/>
            <person name="Yoneyama T."/>
            <person name="Ohtomo N."/>
            <person name="Matsubara K."/>
        </authorList>
    </citation>
    <scope>NUCLEOTIDE SEQUENCE [GENOMIC DNA]</scope>
</reference>
<reference key="2">
    <citation type="journal article" date="2006" name="Biochem. J.">
        <title>Phosphorylation of hepatitis B virus Cp at Ser87 facilitates core assembly.</title>
        <authorList>
            <person name="Kang H.Y."/>
            <person name="Lee S."/>
            <person name="Park S.G."/>
            <person name="Yu J."/>
            <person name="Kim Y."/>
            <person name="Jung G."/>
        </authorList>
    </citation>
    <scope>PHOSPHORYLATION AT SER-87</scope>
    <scope>MUTAGENESIS OF SER-87</scope>
</reference>
<organism>
    <name type="scientific">Hepatitis B virus genotype C subtype adr (strain Japan/adr4/1983)</name>
    <name type="common">HBV-C</name>
    <dbReference type="NCBI Taxonomy" id="10409"/>
    <lineage>
        <taxon>Viruses</taxon>
        <taxon>Riboviria</taxon>
        <taxon>Pararnavirae</taxon>
        <taxon>Artverviricota</taxon>
        <taxon>Revtraviricetes</taxon>
        <taxon>Blubervirales</taxon>
        <taxon>Hepadnaviridae</taxon>
        <taxon>Orthohepadnavirus</taxon>
        <taxon>Hepatitis B virus</taxon>
    </lineage>
</organism>
<protein>
    <recommendedName>
        <fullName evidence="1">Capsid protein</fullName>
    </recommendedName>
    <alternativeName>
        <fullName evidence="1">Core antigen</fullName>
    </alternativeName>
    <alternativeName>
        <fullName evidence="1">Core protein</fullName>
    </alternativeName>
    <alternativeName>
        <fullName evidence="1">HBcAg</fullName>
    </alternativeName>
    <alternativeName>
        <fullName evidence="1">p21.5</fullName>
    </alternativeName>
</protein>
<accession>P69706</accession>
<accession>P03150</accession>
<accession>P03151</accession>
<dbReference type="EMBL" id="X01587">
    <property type="protein sequence ID" value="CAA25745.1"/>
    <property type="molecule type" value="Genomic_DNA"/>
</dbReference>
<dbReference type="EMDB" id="EMD-31233"/>
<dbReference type="EMDB" id="EMD-31234"/>
<dbReference type="EMDB" id="EMD-31545"/>
<dbReference type="SMR" id="P69706"/>
<dbReference type="iPTMnet" id="P69706"/>
<dbReference type="Proteomes" id="UP000007923">
    <property type="component" value="Genome"/>
</dbReference>
<dbReference type="GO" id="GO:0043657">
    <property type="term" value="C:host cell"/>
    <property type="evidence" value="ECO:0007669"/>
    <property type="project" value="GOC"/>
</dbReference>
<dbReference type="GO" id="GO:0030430">
    <property type="term" value="C:host cell cytoplasm"/>
    <property type="evidence" value="ECO:0007669"/>
    <property type="project" value="UniProtKB-SubCell"/>
</dbReference>
<dbReference type="GO" id="GO:0039619">
    <property type="term" value="C:T=4 icosahedral viral capsid"/>
    <property type="evidence" value="ECO:0007669"/>
    <property type="project" value="UniProtKB-UniRule"/>
</dbReference>
<dbReference type="GO" id="GO:0003677">
    <property type="term" value="F:DNA binding"/>
    <property type="evidence" value="ECO:0007669"/>
    <property type="project" value="UniProtKB-UniRule"/>
</dbReference>
<dbReference type="GO" id="GO:0003723">
    <property type="term" value="F:RNA binding"/>
    <property type="evidence" value="ECO:0007669"/>
    <property type="project" value="UniProtKB-UniRule"/>
</dbReference>
<dbReference type="GO" id="GO:0005198">
    <property type="term" value="F:structural molecule activity"/>
    <property type="evidence" value="ECO:0007669"/>
    <property type="project" value="UniProtKB-UniRule"/>
</dbReference>
<dbReference type="GO" id="GO:0075521">
    <property type="term" value="P:microtubule-dependent intracellular transport of viral material towards nucleus"/>
    <property type="evidence" value="ECO:0007669"/>
    <property type="project" value="UniProtKB-UniRule"/>
</dbReference>
<dbReference type="GO" id="GO:0046718">
    <property type="term" value="P:symbiont entry into host cell"/>
    <property type="evidence" value="ECO:0007669"/>
    <property type="project" value="UniProtKB-UniRule"/>
</dbReference>
<dbReference type="GO" id="GO:0075732">
    <property type="term" value="P:viral penetration into host nucleus"/>
    <property type="evidence" value="ECO:0007669"/>
    <property type="project" value="UniProtKB-UniRule"/>
</dbReference>
<dbReference type="FunFam" id="1.10.4090.10:FF:000001">
    <property type="entry name" value="Capsid protein"/>
    <property type="match status" value="1"/>
</dbReference>
<dbReference type="Gene3D" id="1.10.4090.10">
    <property type="entry name" value="Viral capsid, core domain supefamily, Hepatitis B virus"/>
    <property type="match status" value="1"/>
</dbReference>
<dbReference type="HAMAP" id="MF_04076">
    <property type="entry name" value="HBV_HBEAG"/>
    <property type="match status" value="1"/>
</dbReference>
<dbReference type="InterPro" id="IPR002006">
    <property type="entry name" value="Hepatitis_core"/>
</dbReference>
<dbReference type="InterPro" id="IPR036459">
    <property type="entry name" value="Viral_capsid_core_dom_sf_HBV"/>
</dbReference>
<dbReference type="Pfam" id="PF00906">
    <property type="entry name" value="Hepatitis_core"/>
    <property type="match status" value="3"/>
</dbReference>
<dbReference type="SUPFAM" id="SSF47852">
    <property type="entry name" value="Hepatitis B viral capsid (hbcag)"/>
    <property type="match status" value="1"/>
</dbReference>
<comment type="function">
    <text evidence="1">Self assembles to form an icosahedral capsid. Most capsids appear to be large particles with an icosahedral symmetry of T=4 and consist of 240 copies of capsid protein, though a fraction forms smaller T=3 particles consisting of 180 capsid proteins. Entering capsids are transported along microtubules to the nucleus. Phosphorylation of the capsid is thought to induce exposure of nuclear localization signal in the C-terminal portion of the capsid protein that allows binding to the nuclear pore complex via the importin (karyopherin-) alpha and beta. Capsids are imported in intact form through the nuclear pore into the nuclear basket, where it probably binds NUP153. Only capsids that contain the mature viral genome can release the viral DNA and capsid protein into the nucleoplasm. Immature capsids get stuck in the basket. Capsids encapsulate the pre-genomic RNA and the P protein. Pre-genomic RNA is reverse-transcribed into DNA while the capsid is still in the cytoplasm. The capsid can then either be directed to the nucleus, providing more genomes for transcription, or bud through the endoplasmic reticulum to provide new virions.</text>
</comment>
<comment type="subunit">
    <text evidence="1">Homodimerizes, then multimerizes. Interacts with cytosol exposed regions of viral L glycoprotein present in the reticulum-to-Golgi compartment. Interacts with human FLNB. Phosphorylated form interacts with host importin alpha; this interaction depends on the exposure of the NLS, which itself depends upon genome maturation and/or phosphorylation of the capsid protein. Interacts with host NUP153.</text>
</comment>
<comment type="subcellular location">
    <subcellularLocation>
        <location evidence="1">Virion</location>
    </subcellularLocation>
    <subcellularLocation>
        <location evidence="1">Host cytoplasm</location>
    </subcellularLocation>
</comment>
<comment type="alternative products">
    <event type="alternative initiation"/>
    <isoform>
        <id>P69706-1</id>
        <name>Capsid protein</name>
        <sequence type="displayed"/>
    </isoform>
    <isoform>
        <id>P0C6H5-1</id>
        <name>External core antigen</name>
        <sequence type="external"/>
    </isoform>
</comment>
<comment type="PTM">
    <text evidence="1 3">Phosphorylated by host SRPK1, SRPK2, and maybe protein kinase C or GAPDH. Phosphorylation is critical for pregenomic RNA packaging. Protein kinase C phosphorylation is stimulated by HBx protein and may play a role in transport of the viral genome to the nucleus at the late step during the viral replication cycle.</text>
</comment>
<comment type="similarity">
    <text evidence="1">Belongs to the orthohepadnavirus core antigen family.</text>
</comment>
<gene>
    <name evidence="1" type="primary">C</name>
</gene>
<evidence type="ECO:0000255" key="1">
    <source>
        <dbReference type="HAMAP-Rule" id="MF_04076"/>
    </source>
</evidence>
<evidence type="ECO:0000256" key="2">
    <source>
        <dbReference type="SAM" id="MobiDB-lite"/>
    </source>
</evidence>
<evidence type="ECO:0000269" key="3">
    <source>
    </source>
</evidence>
<feature type="chain" id="PRO_0000222310" description="Capsid protein">
    <location>
        <begin position="1"/>
        <end position="183"/>
    </location>
</feature>
<feature type="repeat" description="1; half-length">
    <location>
        <begin position="155"/>
        <end position="161"/>
    </location>
</feature>
<feature type="repeat" description="2">
    <location>
        <begin position="162"/>
        <end position="169"/>
    </location>
</feature>
<feature type="repeat" description="3">
    <location>
        <begin position="170"/>
        <end position="177"/>
    </location>
</feature>
<feature type="region of interest" description="Disordered" evidence="2">
    <location>
        <begin position="136"/>
        <end position="183"/>
    </location>
</feature>
<feature type="region of interest" description="3 X 8 AA repeats of S-P-R-R-R-[PR]-S-Q">
    <location>
        <begin position="155"/>
        <end position="177"/>
    </location>
</feature>
<feature type="region of interest" description="RNA binding" evidence="1">
    <location>
        <begin position="177"/>
        <end position="183"/>
    </location>
</feature>
<feature type="short sequence motif" description="Bipartite nuclear localization signal" evidence="1">
    <location>
        <begin position="158"/>
        <end position="175"/>
    </location>
</feature>
<feature type="compositionally biased region" description="Basic residues" evidence="2">
    <location>
        <begin position="149"/>
        <end position="176"/>
    </location>
</feature>
<feature type="modified residue" description="Phosphoserine; by host PKA" evidence="3">
    <location>
        <position position="87"/>
    </location>
</feature>
<feature type="modified residue" description="Phosphoserine; by host" evidence="1">
    <location>
        <position position="155"/>
    </location>
</feature>
<feature type="modified residue" description="Phosphoserine; by host" evidence="1">
    <location>
        <position position="162"/>
    </location>
</feature>
<feature type="modified residue" description="Phosphoserine; by host" evidence="1">
    <location>
        <position position="170"/>
    </location>
</feature>
<feature type="mutagenesis site" description="Impedes capsid assembly." evidence="3">
    <original>S</original>
    <variation>G</variation>
    <location>
        <position position="87"/>
    </location>
</feature>
<name>CAPSD_HBVC3</name>
<proteinExistence type="evidence at protein level"/>